<comment type="function">
    <text evidence="1">Dephosphorylates 2-hydroxy-3-keto-5-methylthiopentenyl-1-phosphate (HK-MTPenyl-1-P) yielding 1,2-dihydroxy-3-keto-5-methylthiopentene (DHK-MTPene).</text>
</comment>
<comment type="catalytic activity">
    <reaction evidence="1">
        <text>2-hydroxy-5-methylsulfanyl-3-oxopent-1-enyl phosphate + H2O = 1,2-dihydroxy-5-(methylsulfanyl)pent-1-en-3-one + phosphate</text>
        <dbReference type="Rhea" id="RHEA:14481"/>
        <dbReference type="ChEBI" id="CHEBI:15377"/>
        <dbReference type="ChEBI" id="CHEBI:43474"/>
        <dbReference type="ChEBI" id="CHEBI:49252"/>
        <dbReference type="ChEBI" id="CHEBI:59505"/>
        <dbReference type="EC" id="3.1.3.87"/>
    </reaction>
</comment>
<comment type="pathway">
    <text evidence="1">Amino-acid biosynthesis; L-methionine biosynthesis via salvage pathway; L-methionine from S-methyl-5-thio-alpha-D-ribose 1-phosphate: step 4/6.</text>
</comment>
<comment type="similarity">
    <text evidence="1">Belongs to the HAD-like hydrolase superfamily. MtnX family.</text>
</comment>
<dbReference type="EC" id="3.1.3.87" evidence="1"/>
<dbReference type="EMBL" id="CP001407">
    <property type="protein sequence ID" value="ACO29934.1"/>
    <property type="molecule type" value="Genomic_DNA"/>
</dbReference>
<dbReference type="RefSeq" id="WP_000027480.1">
    <property type="nucleotide sequence ID" value="NC_012472.1"/>
</dbReference>
<dbReference type="SMR" id="C1EQR2"/>
<dbReference type="KEGG" id="bcx:BCA_4150"/>
<dbReference type="PATRIC" id="fig|572264.18.peg.4100"/>
<dbReference type="UniPathway" id="UPA00904">
    <property type="reaction ID" value="UER00877"/>
</dbReference>
<dbReference type="Proteomes" id="UP000002210">
    <property type="component" value="Chromosome"/>
</dbReference>
<dbReference type="GO" id="GO:0043716">
    <property type="term" value="F:2-hydroxy-3-keto-5-methylthiopentenyl-1-phosphate phosphatase activity"/>
    <property type="evidence" value="ECO:0007669"/>
    <property type="project" value="UniProtKB-UniRule"/>
</dbReference>
<dbReference type="GO" id="GO:0019509">
    <property type="term" value="P:L-methionine salvage from methylthioadenosine"/>
    <property type="evidence" value="ECO:0007669"/>
    <property type="project" value="UniProtKB-UniRule"/>
</dbReference>
<dbReference type="CDD" id="cd07524">
    <property type="entry name" value="HAD_Pase"/>
    <property type="match status" value="1"/>
</dbReference>
<dbReference type="Gene3D" id="3.90.1470.20">
    <property type="match status" value="1"/>
</dbReference>
<dbReference type="Gene3D" id="3.40.50.1000">
    <property type="entry name" value="HAD superfamily/HAD-like"/>
    <property type="match status" value="1"/>
</dbReference>
<dbReference type="HAMAP" id="MF_01680">
    <property type="entry name" value="Salvage_MtnX"/>
    <property type="match status" value="1"/>
</dbReference>
<dbReference type="InterPro" id="IPR050849">
    <property type="entry name" value="HAD-like_hydrolase_phosphatase"/>
</dbReference>
<dbReference type="InterPro" id="IPR036412">
    <property type="entry name" value="HAD-like_sf"/>
</dbReference>
<dbReference type="InterPro" id="IPR017718">
    <property type="entry name" value="HAD-SF_hydro_IB_MtnX"/>
</dbReference>
<dbReference type="InterPro" id="IPR006384">
    <property type="entry name" value="HAD_hydro_PyrdxlP_Pase-like"/>
</dbReference>
<dbReference type="InterPro" id="IPR023214">
    <property type="entry name" value="HAD_sf"/>
</dbReference>
<dbReference type="NCBIfam" id="TIGR01489">
    <property type="entry name" value="DKMTPPase-SF"/>
    <property type="match status" value="1"/>
</dbReference>
<dbReference type="NCBIfam" id="TIGR01488">
    <property type="entry name" value="HAD-SF-IB"/>
    <property type="match status" value="1"/>
</dbReference>
<dbReference type="NCBIfam" id="NF007103">
    <property type="entry name" value="PRK09552.1"/>
    <property type="match status" value="1"/>
</dbReference>
<dbReference type="NCBIfam" id="TIGR03333">
    <property type="entry name" value="salvage_mtnX"/>
    <property type="match status" value="1"/>
</dbReference>
<dbReference type="PANTHER" id="PTHR28181:SF2">
    <property type="entry name" value="PHOSPHORIC MONOESTER HYDROLASE"/>
    <property type="match status" value="1"/>
</dbReference>
<dbReference type="PANTHER" id="PTHR28181">
    <property type="entry name" value="UPF0655 PROTEIN YCR015C"/>
    <property type="match status" value="1"/>
</dbReference>
<dbReference type="Pfam" id="PF12710">
    <property type="entry name" value="HAD"/>
    <property type="match status" value="1"/>
</dbReference>
<dbReference type="SUPFAM" id="SSF56784">
    <property type="entry name" value="HAD-like"/>
    <property type="match status" value="1"/>
</dbReference>
<feature type="chain" id="PRO_1000187385" description="2-hydroxy-3-keto-5-methylthiopentenyl-1-phosphate phosphatase">
    <location>
        <begin position="1"/>
        <end position="219"/>
    </location>
</feature>
<keyword id="KW-0028">Amino-acid biosynthesis</keyword>
<keyword id="KW-0378">Hydrolase</keyword>
<keyword id="KW-0486">Methionine biosynthesis</keyword>
<accession>C1EQR2</accession>
<evidence type="ECO:0000255" key="1">
    <source>
        <dbReference type="HAMAP-Rule" id="MF_01680"/>
    </source>
</evidence>
<name>MTNX_BACC3</name>
<gene>
    <name evidence="1" type="primary">mtnX</name>
    <name type="ordered locus">BCA_4150</name>
</gene>
<organism>
    <name type="scientific">Bacillus cereus (strain 03BB102)</name>
    <dbReference type="NCBI Taxonomy" id="572264"/>
    <lineage>
        <taxon>Bacteria</taxon>
        <taxon>Bacillati</taxon>
        <taxon>Bacillota</taxon>
        <taxon>Bacilli</taxon>
        <taxon>Bacillales</taxon>
        <taxon>Bacillaceae</taxon>
        <taxon>Bacillus</taxon>
        <taxon>Bacillus cereus group</taxon>
    </lineage>
</organism>
<sequence>MSIQVFCDFDGTITNNDNIMSIMEKFAPPEAEEVKNRILSQELSIQEGVSQLFQLIPTNLHDQIIQFLIETAEIRNGFHEFIQFVNENNISFYVISGGMDFFVYPLLQGLIPKEQIYCNETDFSNEYITVNWPHPCDRLCQNHCGLCKSSLIRKLSDTNDFHIVIGDSITDLQAAKQADKVFARDFLITKCEENHISYTPFETFHDVQTELKHLLEVKL</sequence>
<proteinExistence type="inferred from homology"/>
<reference key="1">
    <citation type="submission" date="2009-02" db="EMBL/GenBank/DDBJ databases">
        <title>Genome sequence of Bacillus cereus 03BB102.</title>
        <authorList>
            <person name="Dodson R.J."/>
            <person name="Jackson P."/>
            <person name="Munk A.C."/>
            <person name="Brettin T."/>
            <person name="Bruce D."/>
            <person name="Detter C."/>
            <person name="Tapia R."/>
            <person name="Han C."/>
            <person name="Sutton G."/>
            <person name="Sims D."/>
        </authorList>
    </citation>
    <scope>NUCLEOTIDE SEQUENCE [LARGE SCALE GENOMIC DNA]</scope>
    <source>
        <strain>03BB102</strain>
    </source>
</reference>
<protein>
    <recommendedName>
        <fullName evidence="1">2-hydroxy-3-keto-5-methylthiopentenyl-1-phosphate phosphatase</fullName>
        <shortName evidence="1">HK-MTPenyl-1-P phosphatase</shortName>
        <ecNumber evidence="1">3.1.3.87</ecNumber>
    </recommendedName>
</protein>